<sequence>MARKKEFRYRGYTFEELLNMSLEDFAKLLPARQRRSLKRGLSPEQKKLLRKIRLAKKGKYNKPIRTHSRDMVILPEMVGMTIHVYNGKEFVPVEIKEEMIGHYLGEFALTRKIVQHGSPGVGATRSSMFVAIK</sequence>
<feature type="chain" id="PRO_1000128048" description="Small ribosomal subunit protein uS19">
    <location>
        <begin position="1"/>
        <end position="133"/>
    </location>
</feature>
<proteinExistence type="inferred from homology"/>
<keyword id="KW-0687">Ribonucleoprotein</keyword>
<keyword id="KW-0689">Ribosomal protein</keyword>
<keyword id="KW-0694">RNA-binding</keyword>
<keyword id="KW-0699">rRNA-binding</keyword>
<name>RS19_THEON</name>
<dbReference type="EMBL" id="CP000855">
    <property type="protein sequence ID" value="ACJ15554.1"/>
    <property type="molecule type" value="Genomic_DNA"/>
</dbReference>
<dbReference type="RefSeq" id="WP_012571027.1">
    <property type="nucleotide sequence ID" value="NC_011529.1"/>
</dbReference>
<dbReference type="SMR" id="B6YSL7"/>
<dbReference type="STRING" id="523850.TON_0070"/>
<dbReference type="GeneID" id="7017716"/>
<dbReference type="KEGG" id="ton:TON_0070"/>
<dbReference type="PATRIC" id="fig|523850.10.peg.70"/>
<dbReference type="eggNOG" id="arCOG04099">
    <property type="taxonomic scope" value="Archaea"/>
</dbReference>
<dbReference type="HOGENOM" id="CLU_097347_1_1_2"/>
<dbReference type="OrthoDB" id="30559at2157"/>
<dbReference type="Proteomes" id="UP000002727">
    <property type="component" value="Chromosome"/>
</dbReference>
<dbReference type="GO" id="GO:0022627">
    <property type="term" value="C:cytosolic small ribosomal subunit"/>
    <property type="evidence" value="ECO:0007669"/>
    <property type="project" value="TreeGrafter"/>
</dbReference>
<dbReference type="GO" id="GO:0019843">
    <property type="term" value="F:rRNA binding"/>
    <property type="evidence" value="ECO:0007669"/>
    <property type="project" value="UniProtKB-UniRule"/>
</dbReference>
<dbReference type="GO" id="GO:0003735">
    <property type="term" value="F:structural constituent of ribosome"/>
    <property type="evidence" value="ECO:0007669"/>
    <property type="project" value="InterPro"/>
</dbReference>
<dbReference type="GO" id="GO:0000028">
    <property type="term" value="P:ribosomal small subunit assembly"/>
    <property type="evidence" value="ECO:0007669"/>
    <property type="project" value="TreeGrafter"/>
</dbReference>
<dbReference type="GO" id="GO:0006412">
    <property type="term" value="P:translation"/>
    <property type="evidence" value="ECO:0007669"/>
    <property type="project" value="UniProtKB-UniRule"/>
</dbReference>
<dbReference type="FunFam" id="3.30.860.10:FF:000002">
    <property type="entry name" value="40S ribosomal protein S15"/>
    <property type="match status" value="1"/>
</dbReference>
<dbReference type="Gene3D" id="3.30.860.10">
    <property type="entry name" value="30s Ribosomal Protein S19, Chain A"/>
    <property type="match status" value="1"/>
</dbReference>
<dbReference type="HAMAP" id="MF_00531">
    <property type="entry name" value="Ribosomal_uS19"/>
    <property type="match status" value="1"/>
</dbReference>
<dbReference type="InterPro" id="IPR002222">
    <property type="entry name" value="Ribosomal_uS19"/>
</dbReference>
<dbReference type="InterPro" id="IPR005732">
    <property type="entry name" value="Ribosomal_uS19_bac-type"/>
</dbReference>
<dbReference type="InterPro" id="IPR020934">
    <property type="entry name" value="Ribosomal_uS19_CS"/>
</dbReference>
<dbReference type="InterPro" id="IPR005713">
    <property type="entry name" value="Ribosomal_uS19_euk/arc"/>
</dbReference>
<dbReference type="InterPro" id="IPR023575">
    <property type="entry name" value="Ribosomal_uS19_SF"/>
</dbReference>
<dbReference type="NCBIfam" id="NF003121">
    <property type="entry name" value="PRK04038.1"/>
    <property type="match status" value="1"/>
</dbReference>
<dbReference type="NCBIfam" id="TIGR01050">
    <property type="entry name" value="rpsS_bact"/>
    <property type="match status" value="1"/>
</dbReference>
<dbReference type="NCBIfam" id="TIGR01025">
    <property type="entry name" value="uS19_arch"/>
    <property type="match status" value="1"/>
</dbReference>
<dbReference type="PANTHER" id="PTHR11880">
    <property type="entry name" value="RIBOSOMAL PROTEIN S19P FAMILY MEMBER"/>
    <property type="match status" value="1"/>
</dbReference>
<dbReference type="PANTHER" id="PTHR11880:SF2">
    <property type="entry name" value="SMALL RIBOSOMAL SUBUNIT PROTEIN US19"/>
    <property type="match status" value="1"/>
</dbReference>
<dbReference type="Pfam" id="PF00203">
    <property type="entry name" value="Ribosomal_S19"/>
    <property type="match status" value="1"/>
</dbReference>
<dbReference type="PIRSF" id="PIRSF002144">
    <property type="entry name" value="Ribosomal_S19"/>
    <property type="match status" value="1"/>
</dbReference>
<dbReference type="PRINTS" id="PR00975">
    <property type="entry name" value="RIBOSOMALS19"/>
</dbReference>
<dbReference type="SUPFAM" id="SSF54570">
    <property type="entry name" value="Ribosomal protein S19"/>
    <property type="match status" value="1"/>
</dbReference>
<dbReference type="PROSITE" id="PS00323">
    <property type="entry name" value="RIBOSOMAL_S19"/>
    <property type="match status" value="1"/>
</dbReference>
<protein>
    <recommendedName>
        <fullName evidence="1">Small ribosomal subunit protein uS19</fullName>
    </recommendedName>
    <alternativeName>
        <fullName evidence="2">30S ribosomal protein S19</fullName>
    </alternativeName>
</protein>
<evidence type="ECO:0000255" key="1">
    <source>
        <dbReference type="HAMAP-Rule" id="MF_00531"/>
    </source>
</evidence>
<evidence type="ECO:0000305" key="2"/>
<reference key="1">
    <citation type="journal article" date="2008" name="J. Bacteriol.">
        <title>The complete genome sequence of Thermococcus onnurineus NA1 reveals a mixed heterotrophic and carboxydotrophic metabolism.</title>
        <authorList>
            <person name="Lee H.S."/>
            <person name="Kang S.G."/>
            <person name="Bae S.S."/>
            <person name="Lim J.K."/>
            <person name="Cho Y."/>
            <person name="Kim Y.J."/>
            <person name="Jeon J.H."/>
            <person name="Cha S.-S."/>
            <person name="Kwon K.K."/>
            <person name="Kim H.-T."/>
            <person name="Park C.-J."/>
            <person name="Lee H.-W."/>
            <person name="Kim S.I."/>
            <person name="Chun J."/>
            <person name="Colwell R.R."/>
            <person name="Kim S.-J."/>
            <person name="Lee J.-H."/>
        </authorList>
    </citation>
    <scope>NUCLEOTIDE SEQUENCE [LARGE SCALE GENOMIC DNA]</scope>
    <source>
        <strain>NA1</strain>
    </source>
</reference>
<comment type="function">
    <text evidence="1">Protein S19 forms a complex with S13 that binds strongly to the 16S ribosomal RNA.</text>
</comment>
<comment type="similarity">
    <text evidence="1">Belongs to the universal ribosomal protein uS19 family.</text>
</comment>
<gene>
    <name evidence="1" type="primary">rps19</name>
    <name type="ordered locus">TON_0070</name>
</gene>
<organism>
    <name type="scientific">Thermococcus onnurineus (strain NA1)</name>
    <dbReference type="NCBI Taxonomy" id="523850"/>
    <lineage>
        <taxon>Archaea</taxon>
        <taxon>Methanobacteriati</taxon>
        <taxon>Methanobacteriota</taxon>
        <taxon>Thermococci</taxon>
        <taxon>Thermococcales</taxon>
        <taxon>Thermococcaceae</taxon>
        <taxon>Thermococcus</taxon>
    </lineage>
</organism>
<accession>B6YSL7</accession>